<gene>
    <name evidence="1" type="primary">glnS</name>
    <name type="ordered locus">Ecok1_05930</name>
    <name type="ORF">APECO1_1384</name>
</gene>
<proteinExistence type="inferred from homology"/>
<name>SYQ_ECOK1</name>
<keyword id="KW-0030">Aminoacyl-tRNA synthetase</keyword>
<keyword id="KW-0067">ATP-binding</keyword>
<keyword id="KW-0963">Cytoplasm</keyword>
<keyword id="KW-0436">Ligase</keyword>
<keyword id="KW-0547">Nucleotide-binding</keyword>
<keyword id="KW-0648">Protein biosynthesis</keyword>
<keyword id="KW-1185">Reference proteome</keyword>
<feature type="chain" id="PRO_1000016293" description="Glutamine--tRNA ligase">
    <location>
        <begin position="1"/>
        <end position="554"/>
    </location>
</feature>
<feature type="region of interest" description="Interaction with tRNA" evidence="1">
    <location>
        <begin position="317"/>
        <end position="324"/>
    </location>
</feature>
<feature type="short sequence motif" description="'HIGH' region" evidence="1">
    <location>
        <begin position="34"/>
        <end position="44"/>
    </location>
</feature>
<feature type="short sequence motif" description="'KMSKS' region" evidence="1">
    <location>
        <begin position="268"/>
        <end position="272"/>
    </location>
</feature>
<feature type="binding site" evidence="1">
    <location>
        <begin position="35"/>
        <end position="37"/>
    </location>
    <ligand>
        <name>ATP</name>
        <dbReference type="ChEBI" id="CHEBI:30616"/>
    </ligand>
</feature>
<feature type="binding site" evidence="1">
    <location>
        <begin position="41"/>
        <end position="47"/>
    </location>
    <ligand>
        <name>ATP</name>
        <dbReference type="ChEBI" id="CHEBI:30616"/>
    </ligand>
</feature>
<feature type="binding site" evidence="1">
    <location>
        <position position="67"/>
    </location>
    <ligand>
        <name>L-glutamine</name>
        <dbReference type="ChEBI" id="CHEBI:58359"/>
    </ligand>
</feature>
<feature type="binding site" evidence="1">
    <location>
        <position position="212"/>
    </location>
    <ligand>
        <name>L-glutamine</name>
        <dbReference type="ChEBI" id="CHEBI:58359"/>
    </ligand>
</feature>
<feature type="binding site" evidence="1">
    <location>
        <position position="231"/>
    </location>
    <ligand>
        <name>ATP</name>
        <dbReference type="ChEBI" id="CHEBI:30616"/>
    </ligand>
</feature>
<feature type="binding site" evidence="1">
    <location>
        <begin position="261"/>
        <end position="262"/>
    </location>
    <ligand>
        <name>ATP</name>
        <dbReference type="ChEBI" id="CHEBI:30616"/>
    </ligand>
</feature>
<feature type="binding site" evidence="1">
    <location>
        <begin position="269"/>
        <end position="271"/>
    </location>
    <ligand>
        <name>ATP</name>
        <dbReference type="ChEBI" id="CHEBI:30616"/>
    </ligand>
</feature>
<comment type="catalytic activity">
    <reaction evidence="1">
        <text>tRNA(Gln) + L-glutamine + ATP = L-glutaminyl-tRNA(Gln) + AMP + diphosphate</text>
        <dbReference type="Rhea" id="RHEA:20121"/>
        <dbReference type="Rhea" id="RHEA-COMP:9662"/>
        <dbReference type="Rhea" id="RHEA-COMP:9681"/>
        <dbReference type="ChEBI" id="CHEBI:30616"/>
        <dbReference type="ChEBI" id="CHEBI:33019"/>
        <dbReference type="ChEBI" id="CHEBI:58359"/>
        <dbReference type="ChEBI" id="CHEBI:78442"/>
        <dbReference type="ChEBI" id="CHEBI:78521"/>
        <dbReference type="ChEBI" id="CHEBI:456215"/>
        <dbReference type="EC" id="6.1.1.18"/>
    </reaction>
</comment>
<comment type="subunit">
    <text evidence="1">Monomer.</text>
</comment>
<comment type="subcellular location">
    <subcellularLocation>
        <location evidence="1">Cytoplasm</location>
    </subcellularLocation>
</comment>
<comment type="similarity">
    <text evidence="1">Belongs to the class-I aminoacyl-tRNA synthetase family.</text>
</comment>
<reference key="1">
    <citation type="journal article" date="2007" name="J. Bacteriol.">
        <title>The genome sequence of avian pathogenic Escherichia coli strain O1:K1:H7 shares strong similarities with human extraintestinal pathogenic E. coli genomes.</title>
        <authorList>
            <person name="Johnson T.J."/>
            <person name="Kariyawasam S."/>
            <person name="Wannemuehler Y."/>
            <person name="Mangiamele P."/>
            <person name="Johnson S.J."/>
            <person name="Doetkott C."/>
            <person name="Skyberg J.A."/>
            <person name="Lynne A.M."/>
            <person name="Johnson J.R."/>
            <person name="Nolan L.K."/>
        </authorList>
    </citation>
    <scope>NUCLEOTIDE SEQUENCE [LARGE SCALE GENOMIC DNA]</scope>
</reference>
<evidence type="ECO:0000255" key="1">
    <source>
        <dbReference type="HAMAP-Rule" id="MF_00126"/>
    </source>
</evidence>
<organism>
    <name type="scientific">Escherichia coli O1:K1 / APEC</name>
    <dbReference type="NCBI Taxonomy" id="405955"/>
    <lineage>
        <taxon>Bacteria</taxon>
        <taxon>Pseudomonadati</taxon>
        <taxon>Pseudomonadota</taxon>
        <taxon>Gammaproteobacteria</taxon>
        <taxon>Enterobacterales</taxon>
        <taxon>Enterobacteriaceae</taxon>
        <taxon>Escherichia</taxon>
    </lineage>
</organism>
<protein>
    <recommendedName>
        <fullName evidence="1">Glutamine--tRNA ligase</fullName>
        <ecNumber evidence="1">6.1.1.18</ecNumber>
    </recommendedName>
    <alternativeName>
        <fullName evidence="1">Glutaminyl-tRNA synthetase</fullName>
        <shortName evidence="1">GlnRS</shortName>
    </alternativeName>
</protein>
<sequence length="554" mass="63494">MSEAEARPTNFIRQIIDEDLASGKHTTVHTRFPPEPNGYLHIGHAKSICLNFGIAQDYKGQCNLRFDDTNPVKEDIEYVDSIKNDVEWLGFHWSGNVRYSSDYFDQLHAYAIELINKGLAYVDELTPEQIREYRGTLTQPGKNSPYRDRSVEENLALFEKMRTGGFEEGKACLRAKIDMASPFIVMRDPVLYRIKFAEHHQTGNKWCIYPMYDFTHCISDALEGITHSLCTLEFQDNRRLYDWVLDNITIPVHPRQYEFSRLNLEYTVMSKRKLNLLVTDKHVEGWDDPRMPTISGLRRRGYTAASIREFCKRIGVTKQDNTIEMASLESCIREDLNENAPRAMAVIDPVKLVIENYQGEGEMVTMPNHPNKPEMGSRQVPFSGEIWIDRADFREEANKQYKRLVLGKEVRLRNAYVIKAERVEKDAEGNITTIFCTYDADTLSKDPADGRKVKGVIHWVSAAHALPVEIRLYDRLFSVPNPGAADDFLSVINPESLVIKQGFAEPSLKDAVAGKAFQFEREGYFCLDSRHSTAEKPVFNRTVGLRDTWAKVGE</sequence>
<accession>A1A8U7</accession>
<dbReference type="EC" id="6.1.1.18" evidence="1"/>
<dbReference type="EMBL" id="CP000468">
    <property type="protein sequence ID" value="ABJ00087.1"/>
    <property type="molecule type" value="Genomic_DNA"/>
</dbReference>
<dbReference type="RefSeq" id="WP_001287134.1">
    <property type="nucleotide sequence ID" value="NZ_CADILS010000005.1"/>
</dbReference>
<dbReference type="SMR" id="A1A8U7"/>
<dbReference type="KEGG" id="ecv:APECO1_1384"/>
<dbReference type="HOGENOM" id="CLU_001882_2_3_6"/>
<dbReference type="Proteomes" id="UP000008216">
    <property type="component" value="Chromosome"/>
</dbReference>
<dbReference type="GO" id="GO:0005829">
    <property type="term" value="C:cytosol"/>
    <property type="evidence" value="ECO:0007669"/>
    <property type="project" value="TreeGrafter"/>
</dbReference>
<dbReference type="GO" id="GO:0005524">
    <property type="term" value="F:ATP binding"/>
    <property type="evidence" value="ECO:0007669"/>
    <property type="project" value="UniProtKB-UniRule"/>
</dbReference>
<dbReference type="GO" id="GO:0004819">
    <property type="term" value="F:glutamine-tRNA ligase activity"/>
    <property type="evidence" value="ECO:0007669"/>
    <property type="project" value="UniProtKB-UniRule"/>
</dbReference>
<dbReference type="GO" id="GO:0006425">
    <property type="term" value="P:glutaminyl-tRNA aminoacylation"/>
    <property type="evidence" value="ECO:0007669"/>
    <property type="project" value="InterPro"/>
</dbReference>
<dbReference type="GO" id="GO:0006424">
    <property type="term" value="P:glutamyl-tRNA aminoacylation"/>
    <property type="evidence" value="ECO:0007669"/>
    <property type="project" value="UniProtKB-UniRule"/>
</dbReference>
<dbReference type="CDD" id="cd00807">
    <property type="entry name" value="GlnRS_core"/>
    <property type="match status" value="1"/>
</dbReference>
<dbReference type="FunFam" id="1.10.1160.10:FF:000001">
    <property type="entry name" value="Glutamine--tRNA ligase"/>
    <property type="match status" value="1"/>
</dbReference>
<dbReference type="FunFam" id="2.40.240.10:FF:000001">
    <property type="entry name" value="Glutamine--tRNA ligase"/>
    <property type="match status" value="1"/>
</dbReference>
<dbReference type="FunFam" id="2.40.240.10:FF:000003">
    <property type="entry name" value="Glutamine--tRNA ligase"/>
    <property type="match status" value="1"/>
</dbReference>
<dbReference type="FunFam" id="3.90.800.10:FF:000001">
    <property type="entry name" value="Glutamine--tRNA ligase"/>
    <property type="match status" value="1"/>
</dbReference>
<dbReference type="FunFam" id="3.40.50.620:FF:000037">
    <property type="entry name" value="Glutamine--tRNA ligase cytoplasmic"/>
    <property type="match status" value="1"/>
</dbReference>
<dbReference type="Gene3D" id="1.10.1160.10">
    <property type="entry name" value="Glutamyl-trna Synthetase, Domain 2"/>
    <property type="match status" value="1"/>
</dbReference>
<dbReference type="Gene3D" id="3.90.800.10">
    <property type="entry name" value="Glutamyl-tRNA Synthetase, Domain 3"/>
    <property type="match status" value="1"/>
</dbReference>
<dbReference type="Gene3D" id="3.40.50.620">
    <property type="entry name" value="HUPs"/>
    <property type="match status" value="1"/>
</dbReference>
<dbReference type="Gene3D" id="2.40.240.10">
    <property type="entry name" value="Ribosomal Protein L25, Chain P"/>
    <property type="match status" value="2"/>
</dbReference>
<dbReference type="HAMAP" id="MF_00126">
    <property type="entry name" value="Gln_tRNA_synth"/>
    <property type="match status" value="1"/>
</dbReference>
<dbReference type="InterPro" id="IPR001412">
    <property type="entry name" value="aa-tRNA-synth_I_CS"/>
</dbReference>
<dbReference type="InterPro" id="IPR004514">
    <property type="entry name" value="Gln-tRNA-synth"/>
</dbReference>
<dbReference type="InterPro" id="IPR050132">
    <property type="entry name" value="Gln/Glu-tRNA_Ligase"/>
</dbReference>
<dbReference type="InterPro" id="IPR022861">
    <property type="entry name" value="Gln_tRNA_ligase_bac"/>
</dbReference>
<dbReference type="InterPro" id="IPR000924">
    <property type="entry name" value="Glu/Gln-tRNA-synth"/>
</dbReference>
<dbReference type="InterPro" id="IPR020058">
    <property type="entry name" value="Glu/Gln-tRNA-synth_Ib_cat-dom"/>
</dbReference>
<dbReference type="InterPro" id="IPR020059">
    <property type="entry name" value="Glu/Gln-tRNA-synth_Ib_codon-bd"/>
</dbReference>
<dbReference type="InterPro" id="IPR020061">
    <property type="entry name" value="Glu_tRNA_lig_a-bdl"/>
</dbReference>
<dbReference type="InterPro" id="IPR020056">
    <property type="entry name" value="Rbsml_bL25/Gln-tRNA_synth_N"/>
</dbReference>
<dbReference type="InterPro" id="IPR011035">
    <property type="entry name" value="Ribosomal_bL25/Gln-tRNA_synth"/>
</dbReference>
<dbReference type="InterPro" id="IPR014729">
    <property type="entry name" value="Rossmann-like_a/b/a_fold"/>
</dbReference>
<dbReference type="InterPro" id="IPR049437">
    <property type="entry name" value="tRNA-synt_1c_C2"/>
</dbReference>
<dbReference type="NCBIfam" id="TIGR00440">
    <property type="entry name" value="glnS"/>
    <property type="match status" value="1"/>
</dbReference>
<dbReference type="NCBIfam" id="NF011291">
    <property type="entry name" value="PRK14703.1"/>
    <property type="match status" value="1"/>
</dbReference>
<dbReference type="PANTHER" id="PTHR43097:SF5">
    <property type="entry name" value="GLUTAMATE--TRNA LIGASE"/>
    <property type="match status" value="1"/>
</dbReference>
<dbReference type="PANTHER" id="PTHR43097">
    <property type="entry name" value="GLUTAMINE-TRNA LIGASE"/>
    <property type="match status" value="1"/>
</dbReference>
<dbReference type="Pfam" id="PF00749">
    <property type="entry name" value="tRNA-synt_1c"/>
    <property type="match status" value="1"/>
</dbReference>
<dbReference type="Pfam" id="PF03950">
    <property type="entry name" value="tRNA-synt_1c_C"/>
    <property type="match status" value="1"/>
</dbReference>
<dbReference type="Pfam" id="PF20974">
    <property type="entry name" value="tRNA-synt_1c_C2"/>
    <property type="match status" value="1"/>
</dbReference>
<dbReference type="PRINTS" id="PR00987">
    <property type="entry name" value="TRNASYNTHGLU"/>
</dbReference>
<dbReference type="SUPFAM" id="SSF52374">
    <property type="entry name" value="Nucleotidylyl transferase"/>
    <property type="match status" value="1"/>
</dbReference>
<dbReference type="SUPFAM" id="SSF50715">
    <property type="entry name" value="Ribosomal protein L25-like"/>
    <property type="match status" value="1"/>
</dbReference>
<dbReference type="PROSITE" id="PS00178">
    <property type="entry name" value="AA_TRNA_LIGASE_I"/>
    <property type="match status" value="1"/>
</dbReference>